<reference key="1">
    <citation type="journal article" date="1993" name="Virus Res.">
        <title>Analysis of the nucleotide sequence of a 43 kbp segment of the genome of variola virus India-1967 strain.</title>
        <authorList>
            <person name="Shchelkunov S.N."/>
            <person name="Blinov V.M."/>
            <person name="Resenchuk S.M."/>
            <person name="Totmenin A.V."/>
            <person name="Sandakhchiev L.S."/>
        </authorList>
    </citation>
    <scope>NUCLEOTIDE SEQUENCE [GENOMIC DNA]</scope>
</reference>
<reference key="2">
    <citation type="journal article" date="1993" name="Virus Res.">
        <title>Nucleotide sequence analysis of variola virus HindIII M, L, I genome fragments.</title>
        <authorList>
            <person name="Shchelkunov S.N."/>
            <person name="Blinov V.M."/>
            <person name="Totmenin A.V."/>
            <person name="Marennikova S.S."/>
            <person name="Kolykhalov A.A."/>
            <person name="Frolov I.V."/>
            <person name="Chizhikov V.E."/>
            <person name="Gytorov V.V."/>
            <person name="Gashikov P.V."/>
            <person name="Belanov E.F."/>
            <person name="Belavin P.A."/>
            <person name="Resenchuk S.M."/>
            <person name="Andzhaparidze O.G."/>
            <person name="Sandakhchiev L.S."/>
        </authorList>
    </citation>
    <scope>NUCLEOTIDE SEQUENCE [GENOMIC DNA]</scope>
</reference>
<reference key="3">
    <citation type="journal article" date="1993" name="FEBS Lett.">
        <title>Genes of variola and vaccinia viruses necessary to overcome the host protective mechanisms.</title>
        <authorList>
            <person name="Shchelkunov S.N."/>
            <person name="Blinov V.M."/>
            <person name="Sandakhchiev L.S."/>
        </authorList>
    </citation>
    <scope>NUCLEOTIDE SEQUENCE [LARGE SCALE GENOMIC DNA]</scope>
</reference>
<protein>
    <recommendedName>
        <fullName>Putative nuclease OPG089</fullName>
        <ecNumber evidence="2">3.1.-.-</ecNumber>
    </recommendedName>
    <alternativeName>
        <fullName>Putative nuclease G5</fullName>
    </alternativeName>
</protein>
<gene>
    <name type="primary">OPG089</name>
    <name type="ORF">G5R</name>
</gene>
<comment type="function">
    <text evidence="2">Putative nuclease that seems to be required for double-strand break repair, homologous recombination, and production of full-length viral genomic DNA.</text>
</comment>
<comment type="cofactor">
    <cofactor evidence="2">
        <name>Mg(2+)</name>
        <dbReference type="ChEBI" id="CHEBI:18420"/>
    </cofactor>
    <text evidence="1">Binds 2 magnesium ions per subunit. They probably participate in the reaction catalyzed by the enzyme.</text>
</comment>
<comment type="subcellular location">
    <subcellularLocation>
        <location evidence="2">Virion</location>
    </subcellularLocation>
    <text evidence="2">Present in the virion core.</text>
</comment>
<comment type="induction">
    <text>Expressed in the early phase of the viral replicative cycle.</text>
</comment>
<comment type="similarity">
    <text evidence="3">Belongs to the XPG/RAD2 endonuclease family. FEN1 subfamily.</text>
</comment>
<name>PG089_VAR67</name>
<keyword id="KW-0227">DNA damage</keyword>
<keyword id="KW-0234">DNA repair</keyword>
<keyword id="KW-0244">Early protein</keyword>
<keyword id="KW-0378">Hydrolase</keyword>
<keyword id="KW-0460">Magnesium</keyword>
<keyword id="KW-0479">Metal-binding</keyword>
<keyword id="KW-0540">Nuclease</keyword>
<keyword id="KW-1185">Reference proteome</keyword>
<keyword id="KW-0946">Virion</keyword>
<evidence type="ECO:0000250" key="1"/>
<evidence type="ECO:0000250" key="2">
    <source>
        <dbReference type="UniProtKB" id="Q80HX0"/>
    </source>
</evidence>
<evidence type="ECO:0000305" key="3"/>
<dbReference type="EC" id="3.1.-.-" evidence="2"/>
<dbReference type="EMBL" id="X67119">
    <property type="protein sequence ID" value="CAA47567.1"/>
    <property type="molecule type" value="Genomic_DNA"/>
</dbReference>
<dbReference type="EMBL" id="X69198">
    <property type="protein sequence ID" value="CAA49008.1"/>
    <property type="molecule type" value="Genomic_DNA"/>
</dbReference>
<dbReference type="PIR" id="S33082">
    <property type="entry name" value="S33082"/>
</dbReference>
<dbReference type="KEGG" id="vg:1486433"/>
<dbReference type="Proteomes" id="UP000002060">
    <property type="component" value="Segment"/>
</dbReference>
<dbReference type="GO" id="GO:0044423">
    <property type="term" value="C:virion component"/>
    <property type="evidence" value="ECO:0007669"/>
    <property type="project" value="UniProtKB-KW"/>
</dbReference>
<dbReference type="GO" id="GO:0046872">
    <property type="term" value="F:metal ion binding"/>
    <property type="evidence" value="ECO:0007669"/>
    <property type="project" value="UniProtKB-KW"/>
</dbReference>
<dbReference type="GO" id="GO:0004518">
    <property type="term" value="F:nuclease activity"/>
    <property type="evidence" value="ECO:0007669"/>
    <property type="project" value="UniProtKB-KW"/>
</dbReference>
<dbReference type="GO" id="GO:0006281">
    <property type="term" value="P:DNA repair"/>
    <property type="evidence" value="ECO:0007669"/>
    <property type="project" value="UniProtKB-KW"/>
</dbReference>
<dbReference type="CDD" id="cd18674">
    <property type="entry name" value="PIN_Pox_G5"/>
    <property type="match status" value="1"/>
</dbReference>
<dbReference type="InterPro" id="IPR007678">
    <property type="entry name" value="Poxvirus_G5"/>
</dbReference>
<dbReference type="Pfam" id="PF04599">
    <property type="entry name" value="Pox_G5"/>
    <property type="match status" value="1"/>
</dbReference>
<accession>P0DSS5</accession>
<accession>P32995</accession>
<proteinExistence type="evidence at transcript level"/>
<feature type="chain" id="PRO_0000099532" description="Putative nuclease OPG089">
    <location>
        <begin position="1"/>
        <end position="434"/>
    </location>
</feature>
<feature type="binding site" evidence="1">
    <location>
        <position position="33"/>
    </location>
    <ligand>
        <name>Mg(2+)</name>
        <dbReference type="ChEBI" id="CHEBI:18420"/>
        <label>1</label>
    </ligand>
</feature>
<feature type="binding site" evidence="1">
    <location>
        <position position="74"/>
    </location>
    <ligand>
        <name>Mg(2+)</name>
        <dbReference type="ChEBI" id="CHEBI:18420"/>
        <label>1</label>
    </ligand>
</feature>
<feature type="binding site" evidence="1">
    <location>
        <position position="168"/>
    </location>
    <ligand>
        <name>Mg(2+)</name>
        <dbReference type="ChEBI" id="CHEBI:18420"/>
        <label>1</label>
    </ligand>
</feature>
<feature type="binding site" evidence="1">
    <location>
        <position position="170"/>
    </location>
    <ligand>
        <name>Mg(2+)</name>
        <dbReference type="ChEBI" id="CHEBI:18420"/>
        <label>1</label>
    </ligand>
</feature>
<feature type="binding site" evidence="1">
    <location>
        <position position="196"/>
    </location>
    <ligand>
        <name>Mg(2+)</name>
        <dbReference type="ChEBI" id="CHEBI:18420"/>
        <label>2</label>
    </ligand>
</feature>
<feature type="binding site" evidence="1">
    <location>
        <position position="198"/>
    </location>
    <ligand>
        <name>Mg(2+)</name>
        <dbReference type="ChEBI" id="CHEBI:18420"/>
        <label>2</label>
    </ligand>
</feature>
<organismHost>
    <name type="scientific">Homo sapiens</name>
    <name type="common">Human</name>
    <dbReference type="NCBI Taxonomy" id="9606"/>
</organismHost>
<organism>
    <name type="scientific">Variola virus (isolate Human/India/Ind3/1967)</name>
    <name type="common">VARV</name>
    <name type="synonym">Smallpox virus</name>
    <dbReference type="NCBI Taxonomy" id="587200"/>
    <lineage>
        <taxon>Viruses</taxon>
        <taxon>Varidnaviria</taxon>
        <taxon>Bamfordvirae</taxon>
        <taxon>Nucleocytoviricota</taxon>
        <taxon>Pokkesviricetes</taxon>
        <taxon>Chitovirales</taxon>
        <taxon>Poxviridae</taxon>
        <taxon>Chordopoxvirinae</taxon>
        <taxon>Orthopoxvirus</taxon>
        <taxon>Variola virus</taxon>
    </lineage>
</organism>
<sequence length="434" mass="49884">MGIKNLKSLLLENKSLTILDDNLYKVYNGIFVDTMSIYIAVANCVRNLEELTTVFIKYVNGWVKKGGHVTLFIDRGSIKIKQNVRDKRRKYSKSTKDRKMLELEKCTSKIQNVTGFMEEEIKAEIQLKIDKLTFQIYLSDSDNIKISLNEILTHFNNNENVTLFYCDERDAEFVMCLEAKTYFFTTGEWPLIISTDQDTMLFASVDNHPKMIKNLTQLFKFVPSAEDNYLAKLTALVNGCDFFPGLYGASITPTNLNKIQLFSDFTINNIVTSLAIKNYYRKTNSTVDVRNIVTFINDYANLDDVYSYIPPCQCTVQEFIFSALDEKWNDFKSSYLETVPLPCQLMYALEPRKEIDVSEVKTLSSYIDFENTKSDIDVIKSISSIFGYSNENCNTIVFGIYKDNLLLSINSSFYFNNSLLITNTKSDNIINIGY</sequence>